<sequence>MSPEGKEMRYRISDIARELQVSPQEVLHFVKEAGGKVASTSSMVKGPMRDLILDQFSDEKKLVDETRKIREEKQLRLSRLEEQSRKTYEKEQQLKDTISGRPERAAAKPRTEVPSESVEPEPVKEMPETVAEPEVTGVVSEPDENVAAVAEEVKSPVEETSETVAEKNDVEGQVSYEVPQKIGGLTVFGTLDVQSSLGMGGEADKKKQRKKRFKEQADELKDEFDIKAKEGGKEREAGGESRKPVKKGSEETKKTTVESTSAKKKKGKKKKKPEVDEKTIEKNIRSTISGMDDTSGSGSSRQKFRKMRKIEREKELEEAEAIKEAERSIIRVTEFATAHELADLMGILPKEIIQHCFTMGKFVTINQRLDKETIELVAMEFGFDAEFVSEVEATEVTEIEDEEEELEIRPPVVTIMGHVDHGKTSLLDYIRSSNVVAGESGGITQHIGAYEVSLDGDRKITFLDTPGHEAFTAMRARGAQVTDIVILVVSADDSVMPQTVEAINHSKAAGVPIVVAINKIDKPDANPEKIKTQLSEAGVLVEDWGGEYQCQEISAKQGTGIDALMEKVLTEAEIRELKANFSEDVPSRGIIVEAELDKGKGVVSTVLVQRGFLKVGDPFVAGHTMGKVRALMDERGKRIREAGPSQPVSVLGFEDLPQSGDLFTVMPSDREAREIAQKRQIIRREHEFRRSTRVKLDSIARQIKEGLMKELSVILKADTDGSIQALADGLMKIHNDEVKVQIIHQGVGQITETDVLLAAASDAIIIGFRVRPNVNAKRLAEKEDLDVRFYSVIYHVIEDIEQALEGMLSPELHEESIGSLEIRQVFKVPKIGNVAGCYMLEGKIFRDSKVRLLRDGVQIYDGVLDSLKRFKDDVKEVDAGYECGLNLKGYSDIKVGDIVEGYRIVEKKRKL</sequence>
<proteinExistence type="inferred from homology"/>
<dbReference type="EMBL" id="CP001101">
    <property type="protein sequence ID" value="ACE03367.1"/>
    <property type="molecule type" value="Genomic_DNA"/>
</dbReference>
<dbReference type="SMR" id="B3ELN8"/>
<dbReference type="STRING" id="331678.Cphamn1_0402"/>
<dbReference type="KEGG" id="cpb:Cphamn1_0402"/>
<dbReference type="eggNOG" id="COG0532">
    <property type="taxonomic scope" value="Bacteria"/>
</dbReference>
<dbReference type="HOGENOM" id="CLU_006301_0_1_10"/>
<dbReference type="OrthoDB" id="9811804at2"/>
<dbReference type="GO" id="GO:0005737">
    <property type="term" value="C:cytoplasm"/>
    <property type="evidence" value="ECO:0007669"/>
    <property type="project" value="UniProtKB-SubCell"/>
</dbReference>
<dbReference type="GO" id="GO:0005525">
    <property type="term" value="F:GTP binding"/>
    <property type="evidence" value="ECO:0007669"/>
    <property type="project" value="UniProtKB-KW"/>
</dbReference>
<dbReference type="GO" id="GO:0003924">
    <property type="term" value="F:GTPase activity"/>
    <property type="evidence" value="ECO:0007669"/>
    <property type="project" value="UniProtKB-UniRule"/>
</dbReference>
<dbReference type="GO" id="GO:0003743">
    <property type="term" value="F:translation initiation factor activity"/>
    <property type="evidence" value="ECO:0007669"/>
    <property type="project" value="UniProtKB-UniRule"/>
</dbReference>
<dbReference type="CDD" id="cd01887">
    <property type="entry name" value="IF2_eIF5B"/>
    <property type="match status" value="1"/>
</dbReference>
<dbReference type="CDD" id="cd03702">
    <property type="entry name" value="IF2_mtIF2_II"/>
    <property type="match status" value="1"/>
</dbReference>
<dbReference type="CDD" id="cd03692">
    <property type="entry name" value="mtIF2_IVc"/>
    <property type="match status" value="1"/>
</dbReference>
<dbReference type="FunFam" id="2.40.30.10:FF:000007">
    <property type="entry name" value="Translation initiation factor IF-2"/>
    <property type="match status" value="1"/>
</dbReference>
<dbReference type="FunFam" id="2.40.30.10:FF:000008">
    <property type="entry name" value="Translation initiation factor IF-2"/>
    <property type="match status" value="1"/>
</dbReference>
<dbReference type="FunFam" id="3.40.50.10050:FF:000001">
    <property type="entry name" value="Translation initiation factor IF-2"/>
    <property type="match status" value="1"/>
</dbReference>
<dbReference type="FunFam" id="3.40.50.300:FF:000019">
    <property type="entry name" value="Translation initiation factor IF-2"/>
    <property type="match status" value="1"/>
</dbReference>
<dbReference type="Gene3D" id="1.10.10.2480">
    <property type="match status" value="1"/>
</dbReference>
<dbReference type="Gene3D" id="3.40.50.300">
    <property type="entry name" value="P-loop containing nucleotide triphosphate hydrolases"/>
    <property type="match status" value="1"/>
</dbReference>
<dbReference type="Gene3D" id="2.40.30.10">
    <property type="entry name" value="Translation factors"/>
    <property type="match status" value="2"/>
</dbReference>
<dbReference type="Gene3D" id="3.40.50.10050">
    <property type="entry name" value="Translation initiation factor IF- 2, domain 3"/>
    <property type="match status" value="1"/>
</dbReference>
<dbReference type="HAMAP" id="MF_00100_B">
    <property type="entry name" value="IF_2_B"/>
    <property type="match status" value="1"/>
</dbReference>
<dbReference type="InterPro" id="IPR053905">
    <property type="entry name" value="EF-G-like_DII"/>
</dbReference>
<dbReference type="InterPro" id="IPR004161">
    <property type="entry name" value="EFTu-like_2"/>
</dbReference>
<dbReference type="InterPro" id="IPR044145">
    <property type="entry name" value="IF2_II"/>
</dbReference>
<dbReference type="InterPro" id="IPR006847">
    <property type="entry name" value="IF2_N"/>
</dbReference>
<dbReference type="InterPro" id="IPR027417">
    <property type="entry name" value="P-loop_NTPase"/>
</dbReference>
<dbReference type="InterPro" id="IPR005225">
    <property type="entry name" value="Small_GTP-bd"/>
</dbReference>
<dbReference type="InterPro" id="IPR000795">
    <property type="entry name" value="T_Tr_GTP-bd_dom"/>
</dbReference>
<dbReference type="InterPro" id="IPR000178">
    <property type="entry name" value="TF_IF2_bacterial-like"/>
</dbReference>
<dbReference type="InterPro" id="IPR015760">
    <property type="entry name" value="TIF_IF2"/>
</dbReference>
<dbReference type="InterPro" id="IPR023115">
    <property type="entry name" value="TIF_IF2_dom3"/>
</dbReference>
<dbReference type="InterPro" id="IPR036925">
    <property type="entry name" value="TIF_IF2_dom3_sf"/>
</dbReference>
<dbReference type="InterPro" id="IPR009000">
    <property type="entry name" value="Transl_B-barrel_sf"/>
</dbReference>
<dbReference type="NCBIfam" id="TIGR00487">
    <property type="entry name" value="IF-2"/>
    <property type="match status" value="1"/>
</dbReference>
<dbReference type="NCBIfam" id="TIGR00231">
    <property type="entry name" value="small_GTP"/>
    <property type="match status" value="1"/>
</dbReference>
<dbReference type="PANTHER" id="PTHR43381:SF5">
    <property type="entry name" value="TR-TYPE G DOMAIN-CONTAINING PROTEIN"/>
    <property type="match status" value="1"/>
</dbReference>
<dbReference type="PANTHER" id="PTHR43381">
    <property type="entry name" value="TRANSLATION INITIATION FACTOR IF-2-RELATED"/>
    <property type="match status" value="1"/>
</dbReference>
<dbReference type="Pfam" id="PF22042">
    <property type="entry name" value="EF-G_D2"/>
    <property type="match status" value="1"/>
</dbReference>
<dbReference type="Pfam" id="PF00009">
    <property type="entry name" value="GTP_EFTU"/>
    <property type="match status" value="1"/>
</dbReference>
<dbReference type="Pfam" id="PF03144">
    <property type="entry name" value="GTP_EFTU_D2"/>
    <property type="match status" value="1"/>
</dbReference>
<dbReference type="Pfam" id="PF11987">
    <property type="entry name" value="IF-2"/>
    <property type="match status" value="1"/>
</dbReference>
<dbReference type="Pfam" id="PF04760">
    <property type="entry name" value="IF2_N"/>
    <property type="match status" value="1"/>
</dbReference>
<dbReference type="SUPFAM" id="SSF52156">
    <property type="entry name" value="Initiation factor IF2/eIF5b, domain 3"/>
    <property type="match status" value="1"/>
</dbReference>
<dbReference type="SUPFAM" id="SSF52540">
    <property type="entry name" value="P-loop containing nucleoside triphosphate hydrolases"/>
    <property type="match status" value="1"/>
</dbReference>
<dbReference type="SUPFAM" id="SSF50447">
    <property type="entry name" value="Translation proteins"/>
    <property type="match status" value="2"/>
</dbReference>
<dbReference type="PROSITE" id="PS51722">
    <property type="entry name" value="G_TR_2"/>
    <property type="match status" value="1"/>
</dbReference>
<dbReference type="PROSITE" id="PS01176">
    <property type="entry name" value="IF2"/>
    <property type="match status" value="1"/>
</dbReference>
<keyword id="KW-0963">Cytoplasm</keyword>
<keyword id="KW-0342">GTP-binding</keyword>
<keyword id="KW-0396">Initiation factor</keyword>
<keyword id="KW-0547">Nucleotide-binding</keyword>
<keyword id="KW-0648">Protein biosynthesis</keyword>
<evidence type="ECO:0000250" key="1"/>
<evidence type="ECO:0000255" key="2">
    <source>
        <dbReference type="HAMAP-Rule" id="MF_00100"/>
    </source>
</evidence>
<evidence type="ECO:0000256" key="3">
    <source>
        <dbReference type="SAM" id="MobiDB-lite"/>
    </source>
</evidence>
<feature type="chain" id="PRO_1000093769" description="Translation initiation factor IF-2">
    <location>
        <begin position="1"/>
        <end position="911"/>
    </location>
</feature>
<feature type="domain" description="tr-type G">
    <location>
        <begin position="408"/>
        <end position="578"/>
    </location>
</feature>
<feature type="region of interest" description="Disordered" evidence="3">
    <location>
        <begin position="80"/>
        <end position="142"/>
    </location>
</feature>
<feature type="region of interest" description="Disordered" evidence="3">
    <location>
        <begin position="153"/>
        <end position="172"/>
    </location>
</feature>
<feature type="region of interest" description="Disordered" evidence="3">
    <location>
        <begin position="195"/>
        <end position="309"/>
    </location>
</feature>
<feature type="region of interest" description="G1" evidence="1">
    <location>
        <begin position="417"/>
        <end position="424"/>
    </location>
</feature>
<feature type="region of interest" description="G2" evidence="1">
    <location>
        <begin position="442"/>
        <end position="446"/>
    </location>
</feature>
<feature type="region of interest" description="G3" evidence="1">
    <location>
        <begin position="464"/>
        <end position="467"/>
    </location>
</feature>
<feature type="region of interest" description="G4" evidence="1">
    <location>
        <begin position="518"/>
        <end position="521"/>
    </location>
</feature>
<feature type="region of interest" description="G5" evidence="1">
    <location>
        <begin position="554"/>
        <end position="556"/>
    </location>
</feature>
<feature type="compositionally biased region" description="Basic and acidic residues" evidence="3">
    <location>
        <begin position="80"/>
        <end position="94"/>
    </location>
</feature>
<feature type="compositionally biased region" description="Basic and acidic residues" evidence="3">
    <location>
        <begin position="101"/>
        <end position="113"/>
    </location>
</feature>
<feature type="compositionally biased region" description="Basic and acidic residues" evidence="3">
    <location>
        <begin position="214"/>
        <end position="256"/>
    </location>
</feature>
<feature type="compositionally biased region" description="Basic residues" evidence="3">
    <location>
        <begin position="262"/>
        <end position="272"/>
    </location>
</feature>
<feature type="compositionally biased region" description="Basic and acidic residues" evidence="3">
    <location>
        <begin position="273"/>
        <end position="284"/>
    </location>
</feature>
<feature type="compositionally biased region" description="Low complexity" evidence="3">
    <location>
        <begin position="286"/>
        <end position="300"/>
    </location>
</feature>
<feature type="binding site" evidence="2">
    <location>
        <begin position="417"/>
        <end position="424"/>
    </location>
    <ligand>
        <name>GTP</name>
        <dbReference type="ChEBI" id="CHEBI:37565"/>
    </ligand>
</feature>
<feature type="binding site" evidence="2">
    <location>
        <begin position="464"/>
        <end position="468"/>
    </location>
    <ligand>
        <name>GTP</name>
        <dbReference type="ChEBI" id="CHEBI:37565"/>
    </ligand>
</feature>
<feature type="binding site" evidence="2">
    <location>
        <begin position="518"/>
        <end position="521"/>
    </location>
    <ligand>
        <name>GTP</name>
        <dbReference type="ChEBI" id="CHEBI:37565"/>
    </ligand>
</feature>
<accession>B3ELN8</accession>
<protein>
    <recommendedName>
        <fullName evidence="2">Translation initiation factor IF-2</fullName>
    </recommendedName>
</protein>
<gene>
    <name evidence="2" type="primary">infB</name>
    <name type="ordered locus">Cphamn1_0402</name>
</gene>
<reference key="1">
    <citation type="submission" date="2008-06" db="EMBL/GenBank/DDBJ databases">
        <title>Complete sequence of Chlorobium phaeobacteroides BS1.</title>
        <authorList>
            <consortium name="US DOE Joint Genome Institute"/>
            <person name="Lucas S."/>
            <person name="Copeland A."/>
            <person name="Lapidus A."/>
            <person name="Glavina del Rio T."/>
            <person name="Dalin E."/>
            <person name="Tice H."/>
            <person name="Bruce D."/>
            <person name="Goodwin L."/>
            <person name="Pitluck S."/>
            <person name="Schmutz J."/>
            <person name="Larimer F."/>
            <person name="Land M."/>
            <person name="Hauser L."/>
            <person name="Kyrpides N."/>
            <person name="Ovchinnikova G."/>
            <person name="Li T."/>
            <person name="Liu Z."/>
            <person name="Zhao F."/>
            <person name="Overmann J."/>
            <person name="Bryant D.A."/>
            <person name="Richardson P."/>
        </authorList>
    </citation>
    <scope>NUCLEOTIDE SEQUENCE [LARGE SCALE GENOMIC DNA]</scope>
    <source>
        <strain>BS1</strain>
    </source>
</reference>
<organism>
    <name type="scientific">Chlorobium phaeobacteroides (strain BS1)</name>
    <dbReference type="NCBI Taxonomy" id="331678"/>
    <lineage>
        <taxon>Bacteria</taxon>
        <taxon>Pseudomonadati</taxon>
        <taxon>Chlorobiota</taxon>
        <taxon>Chlorobiia</taxon>
        <taxon>Chlorobiales</taxon>
        <taxon>Chlorobiaceae</taxon>
        <taxon>Chlorobium/Pelodictyon group</taxon>
        <taxon>Chlorobium</taxon>
    </lineage>
</organism>
<comment type="function">
    <text evidence="2">One of the essential components for the initiation of protein synthesis. Protects formylmethionyl-tRNA from spontaneous hydrolysis and promotes its binding to the 30S ribosomal subunits. Also involved in the hydrolysis of GTP during the formation of the 70S ribosomal complex.</text>
</comment>
<comment type="subcellular location">
    <subcellularLocation>
        <location evidence="2">Cytoplasm</location>
    </subcellularLocation>
</comment>
<comment type="similarity">
    <text evidence="2">Belongs to the TRAFAC class translation factor GTPase superfamily. Classic translation factor GTPase family. IF-2 subfamily.</text>
</comment>
<name>IF2_CHLPB</name>